<sequence length="234" mass="24782">MAKLTKRMRVIRDKVDVTKQYDINEAVALLKELATAKFVESVDVAVNLGIDARKSDQNVRGATVLPHGTGRSVRVAVFTQGANAEAAKAAGAEFVGMEDLADQIKKGEMGFDVVIASPDAMRVVGQLGQLLGPRGLMPNPKVGTVTPNVAEAVNNAKAGQVRYRNDKNGIIHTTIGKVDFDSDKLKENLESLLVALKKAKPSQAKGVYIKKVSLSTTMGAGVSIDQSGLNAVAN</sequence>
<protein>
    <recommendedName>
        <fullName evidence="1">Large ribosomal subunit protein uL1</fullName>
    </recommendedName>
    <alternativeName>
        <fullName evidence="2">50S ribosomal protein L1</fullName>
    </alternativeName>
</protein>
<gene>
    <name evidence="1" type="primary">rplA</name>
    <name type="ordered locus">ECA0220</name>
</gene>
<keyword id="KW-1185">Reference proteome</keyword>
<keyword id="KW-0678">Repressor</keyword>
<keyword id="KW-0687">Ribonucleoprotein</keyword>
<keyword id="KW-0689">Ribosomal protein</keyword>
<keyword id="KW-0694">RNA-binding</keyword>
<keyword id="KW-0699">rRNA-binding</keyword>
<keyword id="KW-0810">Translation regulation</keyword>
<keyword id="KW-0820">tRNA-binding</keyword>
<dbReference type="EMBL" id="BX950851">
    <property type="protein sequence ID" value="CAG73139.1"/>
    <property type="molecule type" value="Genomic_DNA"/>
</dbReference>
<dbReference type="RefSeq" id="WP_011091857.1">
    <property type="nucleotide sequence ID" value="NC_004547.2"/>
</dbReference>
<dbReference type="SMR" id="Q6DAN3"/>
<dbReference type="STRING" id="218491.ECA0220"/>
<dbReference type="GeneID" id="57207086"/>
<dbReference type="KEGG" id="eca:ECA0220"/>
<dbReference type="PATRIC" id="fig|218491.5.peg.220"/>
<dbReference type="eggNOG" id="COG0081">
    <property type="taxonomic scope" value="Bacteria"/>
</dbReference>
<dbReference type="HOGENOM" id="CLU_062853_0_0_6"/>
<dbReference type="OrthoDB" id="9803740at2"/>
<dbReference type="Proteomes" id="UP000007966">
    <property type="component" value="Chromosome"/>
</dbReference>
<dbReference type="GO" id="GO:0022625">
    <property type="term" value="C:cytosolic large ribosomal subunit"/>
    <property type="evidence" value="ECO:0007669"/>
    <property type="project" value="TreeGrafter"/>
</dbReference>
<dbReference type="GO" id="GO:0019843">
    <property type="term" value="F:rRNA binding"/>
    <property type="evidence" value="ECO:0007669"/>
    <property type="project" value="UniProtKB-UniRule"/>
</dbReference>
<dbReference type="GO" id="GO:0003735">
    <property type="term" value="F:structural constituent of ribosome"/>
    <property type="evidence" value="ECO:0007669"/>
    <property type="project" value="InterPro"/>
</dbReference>
<dbReference type="GO" id="GO:0000049">
    <property type="term" value="F:tRNA binding"/>
    <property type="evidence" value="ECO:0007669"/>
    <property type="project" value="UniProtKB-KW"/>
</dbReference>
<dbReference type="GO" id="GO:0006417">
    <property type="term" value="P:regulation of translation"/>
    <property type="evidence" value="ECO:0007669"/>
    <property type="project" value="UniProtKB-KW"/>
</dbReference>
<dbReference type="GO" id="GO:0006412">
    <property type="term" value="P:translation"/>
    <property type="evidence" value="ECO:0007669"/>
    <property type="project" value="UniProtKB-UniRule"/>
</dbReference>
<dbReference type="CDD" id="cd00403">
    <property type="entry name" value="Ribosomal_L1"/>
    <property type="match status" value="1"/>
</dbReference>
<dbReference type="FunFam" id="3.40.50.790:FF:000001">
    <property type="entry name" value="50S ribosomal protein L1"/>
    <property type="match status" value="1"/>
</dbReference>
<dbReference type="Gene3D" id="3.30.190.20">
    <property type="match status" value="1"/>
</dbReference>
<dbReference type="Gene3D" id="3.40.50.790">
    <property type="match status" value="1"/>
</dbReference>
<dbReference type="HAMAP" id="MF_01318_B">
    <property type="entry name" value="Ribosomal_uL1_B"/>
    <property type="match status" value="1"/>
</dbReference>
<dbReference type="InterPro" id="IPR005878">
    <property type="entry name" value="Ribosom_uL1_bac-type"/>
</dbReference>
<dbReference type="InterPro" id="IPR002143">
    <property type="entry name" value="Ribosomal_uL1"/>
</dbReference>
<dbReference type="InterPro" id="IPR023674">
    <property type="entry name" value="Ribosomal_uL1-like"/>
</dbReference>
<dbReference type="InterPro" id="IPR028364">
    <property type="entry name" value="Ribosomal_uL1/biogenesis"/>
</dbReference>
<dbReference type="InterPro" id="IPR016095">
    <property type="entry name" value="Ribosomal_uL1_3-a/b-sand"/>
</dbReference>
<dbReference type="InterPro" id="IPR023673">
    <property type="entry name" value="Ribosomal_uL1_CS"/>
</dbReference>
<dbReference type="NCBIfam" id="TIGR01169">
    <property type="entry name" value="rplA_bact"/>
    <property type="match status" value="1"/>
</dbReference>
<dbReference type="PANTHER" id="PTHR36427">
    <property type="entry name" value="54S RIBOSOMAL PROTEIN L1, MITOCHONDRIAL"/>
    <property type="match status" value="1"/>
</dbReference>
<dbReference type="PANTHER" id="PTHR36427:SF3">
    <property type="entry name" value="LARGE RIBOSOMAL SUBUNIT PROTEIN UL1M"/>
    <property type="match status" value="1"/>
</dbReference>
<dbReference type="Pfam" id="PF00687">
    <property type="entry name" value="Ribosomal_L1"/>
    <property type="match status" value="1"/>
</dbReference>
<dbReference type="PIRSF" id="PIRSF002155">
    <property type="entry name" value="Ribosomal_L1"/>
    <property type="match status" value="1"/>
</dbReference>
<dbReference type="SUPFAM" id="SSF56808">
    <property type="entry name" value="Ribosomal protein L1"/>
    <property type="match status" value="1"/>
</dbReference>
<dbReference type="PROSITE" id="PS01199">
    <property type="entry name" value="RIBOSOMAL_L1"/>
    <property type="match status" value="1"/>
</dbReference>
<organism>
    <name type="scientific">Pectobacterium atrosepticum (strain SCRI 1043 / ATCC BAA-672)</name>
    <name type="common">Erwinia carotovora subsp. atroseptica</name>
    <dbReference type="NCBI Taxonomy" id="218491"/>
    <lineage>
        <taxon>Bacteria</taxon>
        <taxon>Pseudomonadati</taxon>
        <taxon>Pseudomonadota</taxon>
        <taxon>Gammaproteobacteria</taxon>
        <taxon>Enterobacterales</taxon>
        <taxon>Pectobacteriaceae</taxon>
        <taxon>Pectobacterium</taxon>
    </lineage>
</organism>
<name>RL1_PECAS</name>
<feature type="chain" id="PRO_0000125658" description="Large ribosomal subunit protein uL1">
    <location>
        <begin position="1"/>
        <end position="234"/>
    </location>
</feature>
<reference key="1">
    <citation type="journal article" date="2004" name="Proc. Natl. Acad. Sci. U.S.A.">
        <title>Genome sequence of the enterobacterial phytopathogen Erwinia carotovora subsp. atroseptica and characterization of virulence factors.</title>
        <authorList>
            <person name="Bell K.S."/>
            <person name="Sebaihia M."/>
            <person name="Pritchard L."/>
            <person name="Holden M.T.G."/>
            <person name="Hyman L.J."/>
            <person name="Holeva M.C."/>
            <person name="Thomson N.R."/>
            <person name="Bentley S.D."/>
            <person name="Churcher L.J.C."/>
            <person name="Mungall K."/>
            <person name="Atkin R."/>
            <person name="Bason N."/>
            <person name="Brooks K."/>
            <person name="Chillingworth T."/>
            <person name="Clark K."/>
            <person name="Doggett J."/>
            <person name="Fraser A."/>
            <person name="Hance Z."/>
            <person name="Hauser H."/>
            <person name="Jagels K."/>
            <person name="Moule S."/>
            <person name="Norbertczak H."/>
            <person name="Ormond D."/>
            <person name="Price C."/>
            <person name="Quail M.A."/>
            <person name="Sanders M."/>
            <person name="Walker D."/>
            <person name="Whitehead S."/>
            <person name="Salmond G.P.C."/>
            <person name="Birch P.R.J."/>
            <person name="Parkhill J."/>
            <person name="Toth I.K."/>
        </authorList>
    </citation>
    <scope>NUCLEOTIDE SEQUENCE [LARGE SCALE GENOMIC DNA]</scope>
    <source>
        <strain>SCRI 1043 / ATCC BAA-672</strain>
    </source>
</reference>
<evidence type="ECO:0000255" key="1">
    <source>
        <dbReference type="HAMAP-Rule" id="MF_01318"/>
    </source>
</evidence>
<evidence type="ECO:0000305" key="2"/>
<proteinExistence type="inferred from homology"/>
<accession>Q6DAN3</accession>
<comment type="function">
    <text evidence="1">Binds directly to 23S rRNA. The L1 stalk is quite mobile in the ribosome, and is involved in E site tRNA release.</text>
</comment>
<comment type="function">
    <text evidence="1">Protein L1 is also a translational repressor protein, it controls the translation of the L11 operon by binding to its mRNA.</text>
</comment>
<comment type="subunit">
    <text evidence="1">Part of the 50S ribosomal subunit.</text>
</comment>
<comment type="similarity">
    <text evidence="1">Belongs to the universal ribosomal protein uL1 family.</text>
</comment>